<dbReference type="EMBL" id="CP000381">
    <property type="protein sequence ID" value="ABX72291.1"/>
    <property type="molecule type" value="Genomic_DNA"/>
</dbReference>
<dbReference type="RefSeq" id="WP_002215274.1">
    <property type="nucleotide sequence ID" value="NC_010120.1"/>
</dbReference>
<dbReference type="SMR" id="A9LZV9"/>
<dbReference type="GeneID" id="93387140"/>
<dbReference type="KEGG" id="nmn:NMCC_0067"/>
<dbReference type="HOGENOM" id="CLU_017633_0_7_4"/>
<dbReference type="Proteomes" id="UP000001177">
    <property type="component" value="Chromosome"/>
</dbReference>
<dbReference type="GO" id="GO:0005737">
    <property type="term" value="C:cytoplasm"/>
    <property type="evidence" value="ECO:0007669"/>
    <property type="project" value="UniProtKB-SubCell"/>
</dbReference>
<dbReference type="GO" id="GO:0005524">
    <property type="term" value="F:ATP binding"/>
    <property type="evidence" value="ECO:0007669"/>
    <property type="project" value="InterPro"/>
</dbReference>
<dbReference type="GO" id="GO:0031072">
    <property type="term" value="F:heat shock protein binding"/>
    <property type="evidence" value="ECO:0007669"/>
    <property type="project" value="InterPro"/>
</dbReference>
<dbReference type="GO" id="GO:0051082">
    <property type="term" value="F:unfolded protein binding"/>
    <property type="evidence" value="ECO:0007669"/>
    <property type="project" value="UniProtKB-UniRule"/>
</dbReference>
<dbReference type="GO" id="GO:0008270">
    <property type="term" value="F:zinc ion binding"/>
    <property type="evidence" value="ECO:0007669"/>
    <property type="project" value="UniProtKB-UniRule"/>
</dbReference>
<dbReference type="GO" id="GO:0051085">
    <property type="term" value="P:chaperone cofactor-dependent protein refolding"/>
    <property type="evidence" value="ECO:0007669"/>
    <property type="project" value="TreeGrafter"/>
</dbReference>
<dbReference type="GO" id="GO:0006260">
    <property type="term" value="P:DNA replication"/>
    <property type="evidence" value="ECO:0007669"/>
    <property type="project" value="UniProtKB-KW"/>
</dbReference>
<dbReference type="GO" id="GO:0042026">
    <property type="term" value="P:protein refolding"/>
    <property type="evidence" value="ECO:0007669"/>
    <property type="project" value="TreeGrafter"/>
</dbReference>
<dbReference type="GO" id="GO:0009408">
    <property type="term" value="P:response to heat"/>
    <property type="evidence" value="ECO:0007669"/>
    <property type="project" value="InterPro"/>
</dbReference>
<dbReference type="CDD" id="cd06257">
    <property type="entry name" value="DnaJ"/>
    <property type="match status" value="1"/>
</dbReference>
<dbReference type="CDD" id="cd10747">
    <property type="entry name" value="DnaJ_C"/>
    <property type="match status" value="1"/>
</dbReference>
<dbReference type="CDD" id="cd10719">
    <property type="entry name" value="DnaJ_zf"/>
    <property type="match status" value="1"/>
</dbReference>
<dbReference type="FunFam" id="1.10.287.110:FF:000099">
    <property type="entry name" value="Chaperone protein DnaJ"/>
    <property type="match status" value="1"/>
</dbReference>
<dbReference type="FunFam" id="2.10.230.10:FF:000002">
    <property type="entry name" value="Molecular chaperone DnaJ"/>
    <property type="match status" value="1"/>
</dbReference>
<dbReference type="FunFam" id="2.60.260.20:FF:000004">
    <property type="entry name" value="Molecular chaperone DnaJ"/>
    <property type="match status" value="1"/>
</dbReference>
<dbReference type="Gene3D" id="1.10.287.110">
    <property type="entry name" value="DnaJ domain"/>
    <property type="match status" value="1"/>
</dbReference>
<dbReference type="Gene3D" id="2.10.230.10">
    <property type="entry name" value="Heat shock protein DnaJ, cysteine-rich domain"/>
    <property type="match status" value="1"/>
</dbReference>
<dbReference type="Gene3D" id="2.60.260.20">
    <property type="entry name" value="Urease metallochaperone UreE, N-terminal domain"/>
    <property type="match status" value="2"/>
</dbReference>
<dbReference type="HAMAP" id="MF_01152">
    <property type="entry name" value="DnaJ"/>
    <property type="match status" value="1"/>
</dbReference>
<dbReference type="InterPro" id="IPR012724">
    <property type="entry name" value="DnaJ"/>
</dbReference>
<dbReference type="InterPro" id="IPR002939">
    <property type="entry name" value="DnaJ_C"/>
</dbReference>
<dbReference type="InterPro" id="IPR001623">
    <property type="entry name" value="DnaJ_domain"/>
</dbReference>
<dbReference type="InterPro" id="IPR018253">
    <property type="entry name" value="DnaJ_domain_CS"/>
</dbReference>
<dbReference type="InterPro" id="IPR008971">
    <property type="entry name" value="HSP40/DnaJ_pept-bd"/>
</dbReference>
<dbReference type="InterPro" id="IPR001305">
    <property type="entry name" value="HSP_DnaJ_Cys-rich_dom"/>
</dbReference>
<dbReference type="InterPro" id="IPR036410">
    <property type="entry name" value="HSP_DnaJ_Cys-rich_dom_sf"/>
</dbReference>
<dbReference type="InterPro" id="IPR036869">
    <property type="entry name" value="J_dom_sf"/>
</dbReference>
<dbReference type="NCBIfam" id="TIGR02349">
    <property type="entry name" value="DnaJ_bact"/>
    <property type="match status" value="1"/>
</dbReference>
<dbReference type="NCBIfam" id="NF008035">
    <property type="entry name" value="PRK10767.1"/>
    <property type="match status" value="1"/>
</dbReference>
<dbReference type="PANTHER" id="PTHR43096:SF48">
    <property type="entry name" value="CHAPERONE PROTEIN DNAJ"/>
    <property type="match status" value="1"/>
</dbReference>
<dbReference type="PANTHER" id="PTHR43096">
    <property type="entry name" value="DNAJ HOMOLOG 1, MITOCHONDRIAL-RELATED"/>
    <property type="match status" value="1"/>
</dbReference>
<dbReference type="Pfam" id="PF00226">
    <property type="entry name" value="DnaJ"/>
    <property type="match status" value="1"/>
</dbReference>
<dbReference type="Pfam" id="PF01556">
    <property type="entry name" value="DnaJ_C"/>
    <property type="match status" value="1"/>
</dbReference>
<dbReference type="Pfam" id="PF00684">
    <property type="entry name" value="DnaJ_CXXCXGXG"/>
    <property type="match status" value="1"/>
</dbReference>
<dbReference type="PRINTS" id="PR00625">
    <property type="entry name" value="JDOMAIN"/>
</dbReference>
<dbReference type="SMART" id="SM00271">
    <property type="entry name" value="DnaJ"/>
    <property type="match status" value="1"/>
</dbReference>
<dbReference type="SUPFAM" id="SSF46565">
    <property type="entry name" value="Chaperone J-domain"/>
    <property type="match status" value="1"/>
</dbReference>
<dbReference type="SUPFAM" id="SSF57938">
    <property type="entry name" value="DnaJ/Hsp40 cysteine-rich domain"/>
    <property type="match status" value="1"/>
</dbReference>
<dbReference type="SUPFAM" id="SSF49493">
    <property type="entry name" value="HSP40/DnaJ peptide-binding domain"/>
    <property type="match status" value="2"/>
</dbReference>
<dbReference type="PROSITE" id="PS00636">
    <property type="entry name" value="DNAJ_1"/>
    <property type="match status" value="1"/>
</dbReference>
<dbReference type="PROSITE" id="PS50076">
    <property type="entry name" value="DNAJ_2"/>
    <property type="match status" value="1"/>
</dbReference>
<dbReference type="PROSITE" id="PS51188">
    <property type="entry name" value="ZF_CR"/>
    <property type="match status" value="1"/>
</dbReference>
<keyword id="KW-0143">Chaperone</keyword>
<keyword id="KW-0963">Cytoplasm</keyword>
<keyword id="KW-0235">DNA replication</keyword>
<keyword id="KW-0479">Metal-binding</keyword>
<keyword id="KW-0677">Repeat</keyword>
<keyword id="KW-0346">Stress response</keyword>
<keyword id="KW-0862">Zinc</keyword>
<keyword id="KW-0863">Zinc-finger</keyword>
<gene>
    <name evidence="1" type="primary">dnaJ</name>
    <name type="ordered locus">NMCC_0067</name>
</gene>
<sequence>MSNQDFYATLGVARTATDDEIKKAYRKLAMKYHPDRNPDNKEAEEKFKEVQKAYETLSDKEKRAMYDQYGHAAFEGGGQGGFGGFGGFGGAQGFDFGDIFSQMFGGGSGRAQPDYQGEDVQVGIEITLEEAAKGVKKRINIPTYEACDVCNGSGAKPGTSPETCPTCKGSGTVHIQQAIFRMQQTCPTCHGAGKHIKEPCVKCRGAGRNKAVKTVEVNIPAGIDDGQRIRLSGEGGPGMHGAPAGDLYVTVRIRAHKIFQRDGLDLHCELPISFATAALGGELEVPTLDGKVKLTVPKETQTGRRMRVKGKGVKSLRSSATGDLYCHIVVETPVNLTDRQKELLEEFERISTGLENQTPRKKSFLDKLRDLFD</sequence>
<reference key="1">
    <citation type="journal article" date="2008" name="Genomics">
        <title>Characterization of ST-4821 complex, a unique Neisseria meningitidis clone.</title>
        <authorList>
            <person name="Peng J."/>
            <person name="Yang L."/>
            <person name="Yang F."/>
            <person name="Yang J."/>
            <person name="Yan Y."/>
            <person name="Nie H."/>
            <person name="Zhang X."/>
            <person name="Xiong Z."/>
            <person name="Jiang Y."/>
            <person name="Cheng F."/>
            <person name="Xu X."/>
            <person name="Chen S."/>
            <person name="Sun L."/>
            <person name="Li W."/>
            <person name="Shen Y."/>
            <person name="Shao Z."/>
            <person name="Liang X."/>
            <person name="Xu J."/>
            <person name="Jin Q."/>
        </authorList>
    </citation>
    <scope>NUCLEOTIDE SEQUENCE [LARGE SCALE GENOMIC DNA]</scope>
    <source>
        <strain>053442</strain>
    </source>
</reference>
<accession>A9LZV9</accession>
<organism>
    <name type="scientific">Neisseria meningitidis serogroup C (strain 053442)</name>
    <dbReference type="NCBI Taxonomy" id="374833"/>
    <lineage>
        <taxon>Bacteria</taxon>
        <taxon>Pseudomonadati</taxon>
        <taxon>Pseudomonadota</taxon>
        <taxon>Betaproteobacteria</taxon>
        <taxon>Neisseriales</taxon>
        <taxon>Neisseriaceae</taxon>
        <taxon>Neisseria</taxon>
    </lineage>
</organism>
<evidence type="ECO:0000255" key="1">
    <source>
        <dbReference type="HAMAP-Rule" id="MF_01152"/>
    </source>
</evidence>
<name>DNAJ_NEIM0</name>
<feature type="chain" id="PRO_1000085231" description="Chaperone protein DnaJ">
    <location>
        <begin position="1"/>
        <end position="373"/>
    </location>
</feature>
<feature type="domain" description="J" evidence="1">
    <location>
        <begin position="5"/>
        <end position="70"/>
    </location>
</feature>
<feature type="repeat" description="CXXCXGXG motif">
    <location>
        <begin position="147"/>
        <end position="154"/>
    </location>
</feature>
<feature type="repeat" description="CXXCXGXG motif">
    <location>
        <begin position="164"/>
        <end position="171"/>
    </location>
</feature>
<feature type="repeat" description="CXXCXGXG motif">
    <location>
        <begin position="186"/>
        <end position="193"/>
    </location>
</feature>
<feature type="repeat" description="CXXCXGXG motif">
    <location>
        <begin position="200"/>
        <end position="207"/>
    </location>
</feature>
<feature type="zinc finger region" description="CR-type" evidence="1">
    <location>
        <begin position="134"/>
        <end position="212"/>
    </location>
</feature>
<feature type="binding site" evidence="1">
    <location>
        <position position="147"/>
    </location>
    <ligand>
        <name>Zn(2+)</name>
        <dbReference type="ChEBI" id="CHEBI:29105"/>
        <label>1</label>
    </ligand>
</feature>
<feature type="binding site" evidence="1">
    <location>
        <position position="150"/>
    </location>
    <ligand>
        <name>Zn(2+)</name>
        <dbReference type="ChEBI" id="CHEBI:29105"/>
        <label>1</label>
    </ligand>
</feature>
<feature type="binding site" evidence="1">
    <location>
        <position position="164"/>
    </location>
    <ligand>
        <name>Zn(2+)</name>
        <dbReference type="ChEBI" id="CHEBI:29105"/>
        <label>2</label>
    </ligand>
</feature>
<feature type="binding site" evidence="1">
    <location>
        <position position="167"/>
    </location>
    <ligand>
        <name>Zn(2+)</name>
        <dbReference type="ChEBI" id="CHEBI:29105"/>
        <label>2</label>
    </ligand>
</feature>
<feature type="binding site" evidence="1">
    <location>
        <position position="186"/>
    </location>
    <ligand>
        <name>Zn(2+)</name>
        <dbReference type="ChEBI" id="CHEBI:29105"/>
        <label>2</label>
    </ligand>
</feature>
<feature type="binding site" evidence="1">
    <location>
        <position position="189"/>
    </location>
    <ligand>
        <name>Zn(2+)</name>
        <dbReference type="ChEBI" id="CHEBI:29105"/>
        <label>2</label>
    </ligand>
</feature>
<feature type="binding site" evidence="1">
    <location>
        <position position="200"/>
    </location>
    <ligand>
        <name>Zn(2+)</name>
        <dbReference type="ChEBI" id="CHEBI:29105"/>
        <label>1</label>
    </ligand>
</feature>
<feature type="binding site" evidence="1">
    <location>
        <position position="203"/>
    </location>
    <ligand>
        <name>Zn(2+)</name>
        <dbReference type="ChEBI" id="CHEBI:29105"/>
        <label>1</label>
    </ligand>
</feature>
<protein>
    <recommendedName>
        <fullName evidence="1">Chaperone protein DnaJ</fullName>
    </recommendedName>
</protein>
<proteinExistence type="inferred from homology"/>
<comment type="function">
    <text evidence="1">Participates actively in the response to hyperosmotic and heat shock by preventing the aggregation of stress-denatured proteins and by disaggregating proteins, also in an autonomous, DnaK-independent fashion. Unfolded proteins bind initially to DnaJ; upon interaction with the DnaJ-bound protein, DnaK hydrolyzes its bound ATP, resulting in the formation of a stable complex. GrpE releases ADP from DnaK; ATP binding to DnaK triggers the release of the substrate protein, thus completing the reaction cycle. Several rounds of ATP-dependent interactions between DnaJ, DnaK and GrpE are required for fully efficient folding. Also involved, together with DnaK and GrpE, in the DNA replication of plasmids through activation of initiation proteins.</text>
</comment>
<comment type="cofactor">
    <cofactor evidence="1">
        <name>Zn(2+)</name>
        <dbReference type="ChEBI" id="CHEBI:29105"/>
    </cofactor>
    <text evidence="1">Binds 2 Zn(2+) ions per monomer.</text>
</comment>
<comment type="subunit">
    <text evidence="1">Homodimer.</text>
</comment>
<comment type="subcellular location">
    <subcellularLocation>
        <location evidence="1">Cytoplasm</location>
    </subcellularLocation>
</comment>
<comment type="domain">
    <text evidence="1">The J domain is necessary and sufficient to stimulate DnaK ATPase activity. Zinc center 1 plays an important role in the autonomous, DnaK-independent chaperone activity of DnaJ. Zinc center 2 is essential for interaction with DnaK and for DnaJ activity.</text>
</comment>
<comment type="similarity">
    <text evidence="1">Belongs to the DnaJ family.</text>
</comment>